<accession>Q9JJ28</accession>
<accession>Q8K095</accession>
<accession>Q8VI44</accession>
<feature type="chain" id="PRO_0000218751" description="Protein flightless-1 homolog">
    <location>
        <begin position="1"/>
        <end position="1271"/>
    </location>
</feature>
<feature type="repeat" description="LRR 1" evidence="3">
    <location>
        <begin position="7"/>
        <end position="32"/>
    </location>
</feature>
<feature type="repeat" description="LRR 2" evidence="3">
    <location>
        <begin position="33"/>
        <end position="55"/>
    </location>
</feature>
<feature type="repeat" description="LRR 3" evidence="3">
    <location>
        <begin position="56"/>
        <end position="78"/>
    </location>
</feature>
<feature type="repeat" description="LRR 4" evidence="3">
    <location>
        <begin position="80"/>
        <end position="103"/>
    </location>
</feature>
<feature type="repeat" description="LRR 5" evidence="3">
    <location>
        <begin position="104"/>
        <end position="126"/>
    </location>
</feature>
<feature type="repeat" description="LRR 6" evidence="3">
    <location>
        <begin position="127"/>
        <end position="149"/>
    </location>
</feature>
<feature type="repeat" description="LRR 7" evidence="3">
    <location>
        <begin position="150"/>
        <end position="173"/>
    </location>
</feature>
<feature type="repeat" description="LRR 8" evidence="3">
    <location>
        <begin position="175"/>
        <end position="196"/>
    </location>
</feature>
<feature type="repeat" description="LRR 9" evidence="3">
    <location>
        <begin position="197"/>
        <end position="222"/>
    </location>
</feature>
<feature type="repeat" description="LRR 10" evidence="3">
    <location>
        <begin position="223"/>
        <end position="245"/>
    </location>
</feature>
<feature type="repeat" description="LRR 11" evidence="3">
    <location>
        <begin position="247"/>
        <end position="268"/>
    </location>
</feature>
<feature type="repeat" description="LRR 12" evidence="3">
    <location>
        <begin position="269"/>
        <end position="291"/>
    </location>
</feature>
<feature type="repeat" description="LRR 13" evidence="3">
    <location>
        <begin position="293"/>
        <end position="316"/>
    </location>
</feature>
<feature type="repeat" description="LRR 14" evidence="3">
    <location>
        <begin position="317"/>
        <end position="339"/>
    </location>
</feature>
<feature type="repeat" description="LRR 15" evidence="3">
    <location>
        <begin position="340"/>
        <end position="363"/>
    </location>
</feature>
<feature type="repeat" description="LRR 16" evidence="3">
    <location>
        <begin position="365"/>
        <end position="385"/>
    </location>
</feature>
<feature type="repeat" description="Gelsolin-like 1" evidence="3">
    <location>
        <begin position="509"/>
        <end position="591"/>
    </location>
</feature>
<feature type="repeat" description="Gelsolin-like 2" evidence="3">
    <location>
        <begin position="629"/>
        <end position="703"/>
    </location>
</feature>
<feature type="repeat" description="Gelsolin-like 3" evidence="3">
    <location>
        <begin position="759"/>
        <end position="831"/>
    </location>
</feature>
<feature type="repeat" description="Gelsolin-like 4" evidence="3">
    <location>
        <begin position="1183"/>
        <end position="1256"/>
    </location>
</feature>
<feature type="region of interest" description="Interaction with LRRFIP1 and LRRFIP2" evidence="1">
    <location>
        <begin position="1"/>
        <end position="427"/>
    </location>
</feature>
<feature type="region of interest" description="Interaction with ACTL6A" evidence="1">
    <location>
        <begin position="495"/>
        <end position="827"/>
    </location>
</feature>
<feature type="region of interest" description="Disordered" evidence="4">
    <location>
        <begin position="951"/>
        <end position="977"/>
    </location>
</feature>
<feature type="compositionally biased region" description="Basic and acidic residues" evidence="4">
    <location>
        <begin position="952"/>
        <end position="967"/>
    </location>
</feature>
<feature type="compositionally biased region" description="Acidic residues" evidence="4">
    <location>
        <begin position="968"/>
        <end position="977"/>
    </location>
</feature>
<feature type="modified residue" description="N-acetylmethionine" evidence="2">
    <location>
        <position position="1"/>
    </location>
</feature>
<feature type="modified residue" description="N6-acetyllysine" evidence="2">
    <location>
        <position position="21"/>
    </location>
</feature>
<feature type="modified residue" description="Phosphoserine" evidence="2">
    <location>
        <position position="406"/>
    </location>
</feature>
<feature type="modified residue" description="Phosphoserine; by SGK3" evidence="2">
    <location>
        <position position="436"/>
    </location>
</feature>
<feature type="modified residue" description="Phosphoserine" evidence="2">
    <location>
        <position position="860"/>
    </location>
</feature>
<feature type="mutagenesis site" description="Antagonizes actin polymerization in vitro. Homozygous mice have cardiac hypertrophy and reduced cardiac function. Sarcomeric thin filaments in the heart are shortened." evidence="12">
    <original>R</original>
    <variation>H</variation>
    <location>
        <position position="1245"/>
    </location>
</feature>
<feature type="sequence conflict" description="In Ref. 1; AAL36557." evidence="13" ref="1">
    <original>N</original>
    <variation>D</variation>
    <location>
        <position position="849"/>
    </location>
</feature>
<feature type="sequence conflict" description="In Ref. 3; AAH32282." evidence="13" ref="3">
    <original>T</original>
    <variation>I</variation>
    <location>
        <position position="1057"/>
    </location>
</feature>
<comment type="function">
    <text evidence="2 6 7 9 10 12">Is a regulator of actin polymerization, required for proper myofibril organization and regulation of the length of sarcomeric thin filaments (PubMed:22581781, PubMed:37126682). It also plays a role in the assembly of cardiomyocyte cell adhesion complexes (By similarity). Regulates cytoskeletal rearrangements involved in cytokinesis and cell migration, by inhibiting Rac1-dependent paxillin phosphorylation (PubMed:11971982, PubMed:21430700, PubMed:22581781). May play a role as coactivator in transcriptional activation by hormone-activated nuclear receptors (NR) and acts in cooperation with NCOA2 and CARM1. Involved in estrogen hormone signaling (By similarity).</text>
</comment>
<comment type="subunit">
    <text evidence="2 8 12">Interacts with actin, ACTL6A and NCOA2 (By similarity). Interacts with CARM1 (PubMed:14966289). Interacts with LRRFIP1, LRRFIP2 and MYD88 (By similarity). Upon LPS stimulation, LRRFIP2 competes for MYD88-binding; LRRFIP1 constitutively blocks the interaction with MyD88, even in the absence of LPS (By similarity). Interacts with the nuclear receptors ESR1 and THRB (By similarity). Interacts with SGK3 (By similarity). Interacts (via the gelsolin-like region) with TMOD1 and TMOD3 (PubMed:37126682). Interacts with LMOD2, VCL, GSN and DES (PubMed:37126682).</text>
</comment>
<comment type="interaction">
    <interactant intactId="EBI-7996161">
        <id>Q9JJ28</id>
    </interactant>
    <interactant intactId="EBI-2308458">
        <id>Q6PHZ2</id>
        <label>Camk2d</label>
    </interactant>
    <organismsDiffer>false</organismsDiffer>
    <experiments>5</experiments>
</comment>
<comment type="subcellular location">
    <subcellularLocation>
        <location evidence="6">Nucleus</location>
    </subcellularLocation>
    <subcellularLocation>
        <location evidence="6">Cytoplasm</location>
        <location evidence="6">Cytoskeleton</location>
    </subcellularLocation>
    <subcellularLocation>
        <location evidence="6">Cytoplasm</location>
        <location evidence="6">Cytoskeleton</location>
        <location evidence="6">Microtubule organizing center</location>
        <location evidence="6">Centrosome</location>
    </subcellularLocation>
    <subcellularLocation>
        <location evidence="10">Cell junction</location>
        <location evidence="10">Focal adhesion</location>
    </subcellularLocation>
    <subcellularLocation>
        <location evidence="11">Cell projection</location>
        <location evidence="11">Podosome</location>
    </subcellularLocation>
    <text evidence="6 11">Colocalizes to actin-rich structures in blastocysts and, together with HRAS, RHOA and CDC42, in migrating fibroblasts. Localized to the core of macrophage podosomes (PubMed:23525008).</text>
</comment>
<comment type="tissue specificity">
    <text evidence="5">Expressed in blastocyst.</text>
</comment>
<comment type="induction">
    <text evidence="9">Up-regulated in response to wounding.</text>
</comment>
<comment type="disruption phenotype">
    <text evidence="7">FLII knockout results in lethality during early embryogenesis at a stage preceding gastrulation (PubMed:11971982). FLII heart-specific knockdown results in cardiac hypertrophy, reduced ventricular function, increased lung weight and lethality in early adulthood (PubMed:37126682). Mutant hearts have shorter sarcomeres and thin filaments (PubMed:37126682).</text>
</comment>
<comment type="sequence caution" evidence="13">
    <conflict type="miscellaneous discrepancy">
        <sequence resource="EMBL-CDS" id="AAH32282"/>
    </conflict>
    <text>Contaminating sequence. Sequence of unknown origin in the N-terminal part.</text>
</comment>
<dbReference type="EMBL" id="AF142329">
    <property type="protein sequence ID" value="AAF78453.1"/>
    <property type="molecule type" value="Genomic_DNA"/>
</dbReference>
<dbReference type="EMBL" id="AF287264">
    <property type="protein sequence ID" value="AAL36557.1"/>
    <property type="molecule type" value="mRNA"/>
</dbReference>
<dbReference type="EMBL" id="AL596215">
    <property type="status" value="NOT_ANNOTATED_CDS"/>
    <property type="molecule type" value="Genomic_DNA"/>
</dbReference>
<dbReference type="EMBL" id="BC027744">
    <property type="protein sequence ID" value="AAH27744.1"/>
    <property type="molecule type" value="mRNA"/>
</dbReference>
<dbReference type="EMBL" id="BC032282">
    <property type="protein sequence ID" value="AAH32282.1"/>
    <property type="status" value="ALT_INIT"/>
    <property type="molecule type" value="mRNA"/>
</dbReference>
<dbReference type="CCDS" id="CCDS24795.1"/>
<dbReference type="RefSeq" id="NP_071292.1">
    <property type="nucleotide sequence ID" value="NM_022009.2"/>
</dbReference>
<dbReference type="SMR" id="Q9JJ28"/>
<dbReference type="BioGRID" id="199703">
    <property type="interactions" value="16"/>
</dbReference>
<dbReference type="DIP" id="DIP-47641N"/>
<dbReference type="FunCoup" id="Q9JJ28">
    <property type="interactions" value="3052"/>
</dbReference>
<dbReference type="IntAct" id="Q9JJ28">
    <property type="interactions" value="8"/>
</dbReference>
<dbReference type="MINT" id="Q9JJ28"/>
<dbReference type="STRING" id="10090.ENSMUSP00000002889"/>
<dbReference type="GlyGen" id="Q9JJ28">
    <property type="glycosylation" value="2 sites, 1 N-linked glycan (1 site), 1 O-linked glycan (1 site)"/>
</dbReference>
<dbReference type="iPTMnet" id="Q9JJ28"/>
<dbReference type="PhosphoSitePlus" id="Q9JJ28"/>
<dbReference type="SwissPalm" id="Q9JJ28"/>
<dbReference type="PaxDb" id="10090-ENSMUSP00000002889"/>
<dbReference type="PeptideAtlas" id="Q9JJ28"/>
<dbReference type="ProteomicsDB" id="267482"/>
<dbReference type="Pumba" id="Q9JJ28"/>
<dbReference type="Antibodypedia" id="1881">
    <property type="antibodies" value="169 antibodies from 33 providers"/>
</dbReference>
<dbReference type="DNASU" id="14248"/>
<dbReference type="Ensembl" id="ENSMUST00000002889.5">
    <property type="protein sequence ID" value="ENSMUSP00000002889.5"/>
    <property type="gene ID" value="ENSMUSG00000002812.5"/>
</dbReference>
<dbReference type="GeneID" id="14248"/>
<dbReference type="KEGG" id="mmu:14248"/>
<dbReference type="UCSC" id="uc007jgh.2">
    <property type="organism name" value="mouse"/>
</dbReference>
<dbReference type="AGR" id="MGI:1342286"/>
<dbReference type="CTD" id="2314"/>
<dbReference type="MGI" id="MGI:1342286">
    <property type="gene designation" value="Flii"/>
</dbReference>
<dbReference type="VEuPathDB" id="HostDB:ENSMUSG00000002812"/>
<dbReference type="eggNOG" id="KOG0444">
    <property type="taxonomic scope" value="Eukaryota"/>
</dbReference>
<dbReference type="GeneTree" id="ENSGT00940000156643"/>
<dbReference type="HOGENOM" id="CLU_002568_1_0_1"/>
<dbReference type="InParanoid" id="Q9JJ28"/>
<dbReference type="OMA" id="CFHGWSA"/>
<dbReference type="OrthoDB" id="20529at2759"/>
<dbReference type="PhylomeDB" id="Q9JJ28"/>
<dbReference type="TreeFam" id="TF313468"/>
<dbReference type="BioGRID-ORCS" id="14248">
    <property type="hits" value="9 hits in 77 CRISPR screens"/>
</dbReference>
<dbReference type="CD-CODE" id="CE726F99">
    <property type="entry name" value="Postsynaptic density"/>
</dbReference>
<dbReference type="ChiTaRS" id="Flii">
    <property type="organism name" value="mouse"/>
</dbReference>
<dbReference type="PRO" id="PR:Q9JJ28"/>
<dbReference type="Proteomes" id="UP000000589">
    <property type="component" value="Chromosome 11"/>
</dbReference>
<dbReference type="RNAct" id="Q9JJ28">
    <property type="molecule type" value="protein"/>
</dbReference>
<dbReference type="Bgee" id="ENSMUSG00000002812">
    <property type="expression patterns" value="Expressed in ileal epithelium and 266 other cell types or tissues"/>
</dbReference>
<dbReference type="GO" id="GO:0005903">
    <property type="term" value="C:brush border"/>
    <property type="evidence" value="ECO:0000314"/>
    <property type="project" value="UniProtKB"/>
</dbReference>
<dbReference type="GO" id="GO:0042995">
    <property type="term" value="C:cell projection"/>
    <property type="evidence" value="ECO:0007669"/>
    <property type="project" value="UniProtKB-KW"/>
</dbReference>
<dbReference type="GO" id="GO:0034451">
    <property type="term" value="C:centriolar satellite"/>
    <property type="evidence" value="ECO:0007669"/>
    <property type="project" value="Ensembl"/>
</dbReference>
<dbReference type="GO" id="GO:0005829">
    <property type="term" value="C:cytosol"/>
    <property type="evidence" value="ECO:0007669"/>
    <property type="project" value="Ensembl"/>
</dbReference>
<dbReference type="GO" id="GO:0005925">
    <property type="term" value="C:focal adhesion"/>
    <property type="evidence" value="ECO:0007669"/>
    <property type="project" value="UniProtKB-SubCell"/>
</dbReference>
<dbReference type="GO" id="GO:0005654">
    <property type="term" value="C:nucleoplasm"/>
    <property type="evidence" value="ECO:0007669"/>
    <property type="project" value="Ensembl"/>
</dbReference>
<dbReference type="GO" id="GO:0002102">
    <property type="term" value="C:podosome"/>
    <property type="evidence" value="ECO:0000314"/>
    <property type="project" value="UniProtKB"/>
</dbReference>
<dbReference type="GO" id="GO:0051015">
    <property type="term" value="F:actin filament binding"/>
    <property type="evidence" value="ECO:0007669"/>
    <property type="project" value="InterPro"/>
</dbReference>
<dbReference type="GO" id="GO:0030036">
    <property type="term" value="P:actin cytoskeleton organization"/>
    <property type="evidence" value="ECO:0000304"/>
    <property type="project" value="MGI"/>
</dbReference>
<dbReference type="GO" id="GO:0051014">
    <property type="term" value="P:actin filament severing"/>
    <property type="evidence" value="ECO:0000304"/>
    <property type="project" value="MGI"/>
</dbReference>
<dbReference type="GO" id="GO:0045214">
    <property type="term" value="P:sarcomere organization"/>
    <property type="evidence" value="ECO:0000315"/>
    <property type="project" value="UniProtKB"/>
</dbReference>
<dbReference type="CDD" id="cd11280">
    <property type="entry name" value="gelsolin_like"/>
    <property type="match status" value="2"/>
</dbReference>
<dbReference type="CDD" id="cd11290">
    <property type="entry name" value="gelsolin_S1_like"/>
    <property type="match status" value="1"/>
</dbReference>
<dbReference type="CDD" id="cd11292">
    <property type="entry name" value="gelsolin_S3_like"/>
    <property type="match status" value="1"/>
</dbReference>
<dbReference type="CDD" id="cd11288">
    <property type="entry name" value="gelsolin_S5_like"/>
    <property type="match status" value="1"/>
</dbReference>
<dbReference type="CDD" id="cd11291">
    <property type="entry name" value="gelsolin_S6_like"/>
    <property type="match status" value="1"/>
</dbReference>
<dbReference type="FunFam" id="3.80.10.10:FF:000033">
    <property type="entry name" value="FLII, actin remodeling protein"/>
    <property type="match status" value="1"/>
</dbReference>
<dbReference type="FunFam" id="3.80.10.10:FF:000050">
    <property type="entry name" value="FLII, actin remodeling protein"/>
    <property type="match status" value="1"/>
</dbReference>
<dbReference type="FunFam" id="3.80.10.10:FF:000054">
    <property type="entry name" value="FLII, actin remodeling protein"/>
    <property type="match status" value="1"/>
</dbReference>
<dbReference type="FunFam" id="3.40.20.10:FF:000019">
    <property type="entry name" value="protein flightless-1 homolog isoform X1"/>
    <property type="match status" value="1"/>
</dbReference>
<dbReference type="FunFam" id="3.40.20.10:FF:000020">
    <property type="entry name" value="protein flightless-1 homolog isoform X1"/>
    <property type="match status" value="1"/>
</dbReference>
<dbReference type="FunFam" id="3.40.20.10:FF:000030">
    <property type="entry name" value="protein flightless-1 homolog isoform X1"/>
    <property type="match status" value="1"/>
</dbReference>
<dbReference type="FunFam" id="3.40.20.10:FF:000031">
    <property type="entry name" value="protein flightless-1 homolog isoform X1"/>
    <property type="match status" value="1"/>
</dbReference>
<dbReference type="FunFam" id="3.40.20.10:FF:000034">
    <property type="entry name" value="protein flightless-1 homolog isoform X1"/>
    <property type="match status" value="1"/>
</dbReference>
<dbReference type="FunFam" id="3.40.20.10:FF:000021">
    <property type="entry name" value="protein flightless-1 homolog isoform X2"/>
    <property type="match status" value="1"/>
</dbReference>
<dbReference type="Gene3D" id="3.80.10.10">
    <property type="entry name" value="Ribonuclease Inhibitor"/>
    <property type="match status" value="3"/>
</dbReference>
<dbReference type="Gene3D" id="3.40.20.10">
    <property type="entry name" value="Severin"/>
    <property type="match status" value="6"/>
</dbReference>
<dbReference type="InterPro" id="IPR029006">
    <property type="entry name" value="ADF-H/Gelsolin-like_dom_sf"/>
</dbReference>
<dbReference type="InterPro" id="IPR007123">
    <property type="entry name" value="Gelsolin-like_dom"/>
</dbReference>
<dbReference type="InterPro" id="IPR036180">
    <property type="entry name" value="Gelsolin-like_dom_sf"/>
</dbReference>
<dbReference type="InterPro" id="IPR001611">
    <property type="entry name" value="Leu-rich_rpt"/>
</dbReference>
<dbReference type="InterPro" id="IPR003591">
    <property type="entry name" value="Leu-rich_rpt_typical-subtyp"/>
</dbReference>
<dbReference type="InterPro" id="IPR032675">
    <property type="entry name" value="LRR_dom_sf"/>
</dbReference>
<dbReference type="InterPro" id="IPR055414">
    <property type="entry name" value="LRR_R13L4/SHOC2-like"/>
</dbReference>
<dbReference type="InterPro" id="IPR007122">
    <property type="entry name" value="Villin/Gelsolin"/>
</dbReference>
<dbReference type="PANTHER" id="PTHR11977:SF51">
    <property type="entry name" value="PROTEIN FLIGHTLESS-1 HOMOLOG"/>
    <property type="match status" value="1"/>
</dbReference>
<dbReference type="PANTHER" id="PTHR11977">
    <property type="entry name" value="VILLIN"/>
    <property type="match status" value="1"/>
</dbReference>
<dbReference type="Pfam" id="PF00626">
    <property type="entry name" value="Gelsolin"/>
    <property type="match status" value="4"/>
</dbReference>
<dbReference type="Pfam" id="PF00560">
    <property type="entry name" value="LRR_1"/>
    <property type="match status" value="1"/>
</dbReference>
<dbReference type="Pfam" id="PF23598">
    <property type="entry name" value="LRR_14"/>
    <property type="match status" value="1"/>
</dbReference>
<dbReference type="Pfam" id="PF13855">
    <property type="entry name" value="LRR_8"/>
    <property type="match status" value="1"/>
</dbReference>
<dbReference type="PRINTS" id="PR00597">
    <property type="entry name" value="GELSOLIN"/>
</dbReference>
<dbReference type="PRINTS" id="PR00019">
    <property type="entry name" value="LEURICHRPT"/>
</dbReference>
<dbReference type="SMART" id="SM00262">
    <property type="entry name" value="GEL"/>
    <property type="match status" value="6"/>
</dbReference>
<dbReference type="SMART" id="SM00364">
    <property type="entry name" value="LRR_BAC"/>
    <property type="match status" value="7"/>
</dbReference>
<dbReference type="SMART" id="SM00365">
    <property type="entry name" value="LRR_SD22"/>
    <property type="match status" value="4"/>
</dbReference>
<dbReference type="SMART" id="SM00369">
    <property type="entry name" value="LRR_TYP"/>
    <property type="match status" value="9"/>
</dbReference>
<dbReference type="SUPFAM" id="SSF55753">
    <property type="entry name" value="Actin depolymerizing proteins"/>
    <property type="match status" value="5"/>
</dbReference>
<dbReference type="SUPFAM" id="SSF82754">
    <property type="entry name" value="C-terminal, gelsolin-like domain of Sec23/24"/>
    <property type="match status" value="1"/>
</dbReference>
<dbReference type="SUPFAM" id="SSF52058">
    <property type="entry name" value="L domain-like"/>
    <property type="match status" value="2"/>
</dbReference>
<dbReference type="PROSITE" id="PS51450">
    <property type="entry name" value="LRR"/>
    <property type="match status" value="11"/>
</dbReference>
<keyword id="KW-0007">Acetylation</keyword>
<keyword id="KW-0009">Actin-binding</keyword>
<keyword id="KW-0010">Activator</keyword>
<keyword id="KW-0965">Cell junction</keyword>
<keyword id="KW-0966">Cell projection</keyword>
<keyword id="KW-0963">Cytoplasm</keyword>
<keyword id="KW-0206">Cytoskeleton</keyword>
<keyword id="KW-0433">Leucine-rich repeat</keyword>
<keyword id="KW-0539">Nucleus</keyword>
<keyword id="KW-0597">Phosphoprotein</keyword>
<keyword id="KW-1185">Reference proteome</keyword>
<keyword id="KW-0677">Repeat</keyword>
<keyword id="KW-0804">Transcription</keyword>
<keyword id="KW-0805">Transcription regulation</keyword>
<reference key="1">
    <citation type="journal article" date="2000" name="DNA Seq.">
        <title>Fliih, the murine homologue of the Drosophila melanogaster flightless I gene: nucleotide sequence, chromosomal mapping and overlap with Llglh.</title>
        <authorList>
            <person name="Campbell H.D."/>
            <person name="Fountain S."/>
            <person name="Young I.G."/>
            <person name="Weitz S."/>
            <person name="Lichter P."/>
            <person name="Hoheisel J.D."/>
        </authorList>
    </citation>
    <scope>NUCLEOTIDE SEQUENCE [GENOMIC DNA / MRNA]</scope>
    <source>
        <strain>BALB/cJ</strain>
        <tissue>Brain</tissue>
    </source>
</reference>
<reference key="2">
    <citation type="journal article" date="2009" name="PLoS Biol.">
        <title>Lineage-specific biology revealed by a finished genome assembly of the mouse.</title>
        <authorList>
            <person name="Church D.M."/>
            <person name="Goodstadt L."/>
            <person name="Hillier L.W."/>
            <person name="Zody M.C."/>
            <person name="Goldstein S."/>
            <person name="She X."/>
            <person name="Bult C.J."/>
            <person name="Agarwala R."/>
            <person name="Cherry J.L."/>
            <person name="DiCuccio M."/>
            <person name="Hlavina W."/>
            <person name="Kapustin Y."/>
            <person name="Meric P."/>
            <person name="Maglott D."/>
            <person name="Birtle Z."/>
            <person name="Marques A.C."/>
            <person name="Graves T."/>
            <person name="Zhou S."/>
            <person name="Teague B."/>
            <person name="Potamousis K."/>
            <person name="Churas C."/>
            <person name="Place M."/>
            <person name="Herschleb J."/>
            <person name="Runnheim R."/>
            <person name="Forrest D."/>
            <person name="Amos-Landgraf J."/>
            <person name="Schwartz D.C."/>
            <person name="Cheng Z."/>
            <person name="Lindblad-Toh K."/>
            <person name="Eichler E.E."/>
            <person name="Ponting C.P."/>
        </authorList>
    </citation>
    <scope>NUCLEOTIDE SEQUENCE [LARGE SCALE GENOMIC DNA]</scope>
    <source>
        <strain>C57BL/6J</strain>
    </source>
</reference>
<reference key="3">
    <citation type="journal article" date="2004" name="Genome Res.">
        <title>The status, quality, and expansion of the NIH full-length cDNA project: the Mammalian Gene Collection (MGC).</title>
        <authorList>
            <consortium name="The MGC Project Team"/>
        </authorList>
    </citation>
    <scope>NUCLEOTIDE SEQUENCE [LARGE SCALE MRNA]</scope>
    <source>
        <strain>FVB/N</strain>
        <tissue>Kidney</tissue>
        <tissue>Liver</tissue>
    </source>
</reference>
<reference key="4">
    <citation type="journal article" date="2000" name="Immunol. Cell Biol.">
        <title>The flightless I protein localizes to actin-based structures during embryonic development.</title>
        <authorList>
            <person name="Davy D.A."/>
            <person name="Ball E.E."/>
            <person name="Matthaei K.I."/>
            <person name="Campbell H.D."/>
            <person name="Crouch M.F."/>
        </authorList>
    </citation>
    <scope>SUBCELLULAR LOCATION</scope>
    <scope>TISSUE SPECIFICITY</scope>
</reference>
<reference key="5">
    <citation type="journal article" date="2002" name="Mol. Cell. Biol.">
        <title>Fliih, a gelsolin-related cytoskeletal regulator essential for early mammalian embryonic development.</title>
        <authorList>
            <person name="Campbell H.D."/>
            <person name="Fountain S."/>
            <person name="McLennan I.S."/>
            <person name="Berven L.A."/>
            <person name="Crouch M.F."/>
            <person name="Davy D.A."/>
            <person name="Hooper J.A."/>
            <person name="Waterford K."/>
            <person name="Chen K.-S."/>
            <person name="Lupski J.R."/>
            <person name="Ledermann B."/>
            <person name="Young I.G."/>
            <person name="Matthaei K.I."/>
        </authorList>
    </citation>
    <scope>FUNCTION</scope>
    <scope>DISRUPTION PHENOTYPE</scope>
</reference>
<reference key="6">
    <citation type="journal article" date="2004" name="Mol. Cell. Biol.">
        <title>Developmentally essential protein flightless I is a nuclear receptor coactivator with actin binding activity.</title>
        <authorList>
            <person name="Lee Y.-H."/>
            <person name="Campbell H.D."/>
            <person name="Stallcup M.R."/>
        </authorList>
    </citation>
    <scope>INTERACTION WITH CARM1</scope>
</reference>
<reference key="7">
    <citation type="journal article" date="2001" name="J. Cell Sci.">
        <title>The flightless I protein colocalizes with actin- and microtubule-based structures in motile Swiss 3T3 fibroblasts: evidence for the involvement of PI 3-kinase and Ras-related small GTPases.</title>
        <authorList>
            <person name="Davy D.A."/>
            <person name="Campbell H.D."/>
            <person name="Fountain S."/>
            <person name="de Jong D."/>
            <person name="Crouch M.F."/>
        </authorList>
    </citation>
    <scope>FUNCTION</scope>
    <scope>SUBCELLULAR LOCATION</scope>
</reference>
<reference key="8">
    <citation type="journal article" date="2010" name="Cell">
        <title>A tissue-specific atlas of mouse protein phosphorylation and expression.</title>
        <authorList>
            <person name="Huttlin E.L."/>
            <person name="Jedrychowski M.P."/>
            <person name="Elias J.E."/>
            <person name="Goswami T."/>
            <person name="Rad R."/>
            <person name="Beausoleil S.A."/>
            <person name="Villen J."/>
            <person name="Haas W."/>
            <person name="Sowa M.E."/>
            <person name="Gygi S.P."/>
        </authorList>
    </citation>
    <scope>IDENTIFICATION BY MASS SPECTROMETRY [LARGE SCALE ANALYSIS]</scope>
    <source>
        <tissue>Brown adipose tissue</tissue>
        <tissue>Kidney</tissue>
        <tissue>Liver</tissue>
        <tissue>Lung</tissue>
        <tissue>Pancreas</tissue>
        <tissue>Spleen</tissue>
        <tissue>Testis</tissue>
    </source>
</reference>
<reference key="9">
    <citation type="journal article" date="2011" name="J. Invest. Dermatol.">
        <title>Regulation of focal adhesions by flightless i involves inhibition of paxillin phosphorylation via a Rac1-dependent pathway.</title>
        <authorList>
            <person name="Kopecki Z."/>
            <person name="O'Neill G.M."/>
            <person name="Arkell R.M."/>
            <person name="Cowin A.J."/>
        </authorList>
    </citation>
    <scope>FUNCTION</scope>
    <scope>SUBCELLULAR LOCATION</scope>
    <scope>INDUCTION BY WOUND</scope>
</reference>
<reference key="10">
    <citation type="journal article" date="2012" name="FASEB J.">
        <title>Flightless I is a focal adhesion-associated actin-capping protein that regulates cell migration.</title>
        <authorList>
            <person name="Mohammad I."/>
            <person name="Arora P.D."/>
            <person name="Naghibzadeh Y."/>
            <person name="Wang Y."/>
            <person name="Li J."/>
            <person name="Mascarenhas W."/>
            <person name="Janmey P.A."/>
            <person name="Dawson J.F."/>
            <person name="McCulloch C.A."/>
        </authorList>
    </citation>
    <scope>FUNCTION</scope>
    <scope>SUBCELLULAR LOCATION</scope>
</reference>
<reference key="11">
    <citation type="journal article" date="2013" name="J. Cell Sci.">
        <title>Amotl2 interacts with LL5beta, localizes to podosomes and regulates postsynaptic differentiation in muscle.</title>
        <authorList>
            <person name="Proszynski T.J."/>
            <person name="Sanes J.R."/>
        </authorList>
    </citation>
    <scope>SUBCELLULAR LOCATION</scope>
</reference>
<reference key="12">
    <citation type="journal article" date="2023" name="Proc. Natl. Acad. Sci. U.S.A.">
        <title>A human FLII gene variant alters sarcomeric actin thin filament length and predisposes to cardiomyopathy.</title>
        <authorList>
            <person name="Kuwabara Y."/>
            <person name="York A.J."/>
            <person name="Lin S.C."/>
            <person name="Sargent M.A."/>
            <person name="Grimes K.M."/>
            <person name="Pirruccello J.P."/>
            <person name="Molkentin J.D."/>
        </authorList>
    </citation>
    <scope>FUNCTION</scope>
    <scope>DISRUPTION PHENOTYPE</scope>
    <scope>MUTAGENESIS OF ARG-1245</scope>
    <scope>INTERACTION WITH TMOD1; TMOD3; LMOD2; VCL; GSN AND DES</scope>
</reference>
<organism>
    <name type="scientific">Mus musculus</name>
    <name type="common">Mouse</name>
    <dbReference type="NCBI Taxonomy" id="10090"/>
    <lineage>
        <taxon>Eukaryota</taxon>
        <taxon>Metazoa</taxon>
        <taxon>Chordata</taxon>
        <taxon>Craniata</taxon>
        <taxon>Vertebrata</taxon>
        <taxon>Euteleostomi</taxon>
        <taxon>Mammalia</taxon>
        <taxon>Eutheria</taxon>
        <taxon>Euarchontoglires</taxon>
        <taxon>Glires</taxon>
        <taxon>Rodentia</taxon>
        <taxon>Myomorpha</taxon>
        <taxon>Muroidea</taxon>
        <taxon>Muridae</taxon>
        <taxon>Murinae</taxon>
        <taxon>Mus</taxon>
        <taxon>Mus</taxon>
    </lineage>
</organism>
<name>FLII_MOUSE</name>
<proteinExistence type="evidence at protein level"/>
<gene>
    <name type="primary">Flii</name>
    <name type="synonym">Fli1</name>
    <name type="synonym">Fliih</name>
</gene>
<sequence length="1271" mass="144803">MEATGVLPFVRGVDLSGNDFKGGYFPENVKAMTSLRWLKLNRTGLCYLPEELAALQKLEHLSVSHNHLTTLHGELSSLPSLRAIVARANSLKNSGVPDDIFKLDDLSVLDLSHNQLTECPRELENAKNMLVLNLSHNGIDSIPNQLFINLTDLLYLDLSENRLESLPPQMRRLVHLQTLVLNGNPLLHAQLRQLPAMMALQTLHLRNTQRTQSNLPTSLEGLSNLSDVDLSCNDLTRVPECLYTLPSLRRLNLSSNQIAELSLCIDQWVHLETLNLSRNQLTSLPSAICKLTKLKKLYLNSNKLDFDGLPSGIGKLTSLEEFMAANNNLELIPESLCRCPKLKKLVLNKNRLVTLPEAIHFLTEIQVLDVRENPSLVMPPKPADRTAEWYNIDFSLQNQLRLAGASPATVAAAAAVGSGSKDPLARKMRLRRRKDSAQDVQAKQVLKGMSDVAQEKNKNQEESIDARAPGGKVRRWDQGLEKPRLDYSEFFTEDVGQLPGLTIWQIENFVPVLVEEAFHGKFYEADCYIVLKTFLDDSGSLNWEIYYWIGGEATLDKKACSAIHAVNLRNYLGAECRTVREEMGDESEEFLQVFDNDISYIEGGTASGFYTVEDTHYVTRMYRVYGKKNIKLEPVPLKGSSLDPRFVFLLDQGLDIYVWRGAQATLSNTTKARLFAEKINKNERKGKAEITLLVQGQEPPGFWDVLGGEPSEIKNHVPDDFWPPQPKLYKVGLGLGYLELPQINYKLSVEHKKRPKVELMPGMRLLQSLLDTRCVYILDCWSDVFIWLGRKSPRLVRAAALKLGQELCGMLHRPRHTVVSRSLEGTEAQVFKAKFKNWDDVLTVDYTRNAEAVLQGQGLSGKVKRDTEKTDQMKADLTALFLPRQPPMPLAEAEQLMEEWNEDLDGMEGFVLEGRKFTRLPEEEFGHFYTQDCYVFLCRYWVPVEYEEEEKTEDKEGKASAEAREGEEAAAEAEEKQPEEDFQCIVYFWQGREASNMGWLTFTFSLQKKFESLFPGKLEVVRMTQQQENPKFLSHFKRKFIIHRGKRKVTQGTLQPTLYQIRTNGSALCTRCIQINTDSSLLNSEFCFILKVPFESEDNQGIVYAWVGRASDPDEAKLAEDILNTMFDASYSKQVINEGEEPENFFWVGIGAQKPYDDDAEYMKHTRLFRCSNEKGYFAVTEKCSDFCQDDLADDDIMLLDNGQEVYMWVGTQTSQVEIKLSLKACQVYIQHTRSKEHERPRRLRLVRKGNEQRAFTRCFHAWSTFRQAPA</sequence>
<evidence type="ECO:0000250" key="1"/>
<evidence type="ECO:0000250" key="2">
    <source>
        <dbReference type="UniProtKB" id="Q13045"/>
    </source>
</evidence>
<evidence type="ECO:0000255" key="3"/>
<evidence type="ECO:0000256" key="4">
    <source>
        <dbReference type="SAM" id="MobiDB-lite"/>
    </source>
</evidence>
<evidence type="ECO:0000269" key="5">
    <source>
    </source>
</evidence>
<evidence type="ECO:0000269" key="6">
    <source>
    </source>
</evidence>
<evidence type="ECO:0000269" key="7">
    <source>
    </source>
</evidence>
<evidence type="ECO:0000269" key="8">
    <source>
    </source>
</evidence>
<evidence type="ECO:0000269" key="9">
    <source>
    </source>
</evidence>
<evidence type="ECO:0000269" key="10">
    <source>
    </source>
</evidence>
<evidence type="ECO:0000269" key="11">
    <source>
    </source>
</evidence>
<evidence type="ECO:0000269" key="12">
    <source>
    </source>
</evidence>
<evidence type="ECO:0000305" key="13"/>
<protein>
    <recommendedName>
        <fullName>Protein flightless-1 homolog</fullName>
    </recommendedName>
</protein>